<evidence type="ECO:0000255" key="1">
    <source>
        <dbReference type="HAMAP-Rule" id="MF_00036"/>
    </source>
</evidence>
<name>SYA_LISMO</name>
<gene>
    <name evidence="1" type="primary">alaS</name>
    <name type="ordered locus">lmo1504</name>
</gene>
<proteinExistence type="inferred from homology"/>
<organism>
    <name type="scientific">Listeria monocytogenes serovar 1/2a (strain ATCC BAA-679 / EGD-e)</name>
    <dbReference type="NCBI Taxonomy" id="169963"/>
    <lineage>
        <taxon>Bacteria</taxon>
        <taxon>Bacillati</taxon>
        <taxon>Bacillota</taxon>
        <taxon>Bacilli</taxon>
        <taxon>Bacillales</taxon>
        <taxon>Listeriaceae</taxon>
        <taxon>Listeria</taxon>
    </lineage>
</organism>
<reference key="1">
    <citation type="journal article" date="2001" name="Science">
        <title>Comparative genomics of Listeria species.</title>
        <authorList>
            <person name="Glaser P."/>
            <person name="Frangeul L."/>
            <person name="Buchrieser C."/>
            <person name="Rusniok C."/>
            <person name="Amend A."/>
            <person name="Baquero F."/>
            <person name="Berche P."/>
            <person name="Bloecker H."/>
            <person name="Brandt P."/>
            <person name="Chakraborty T."/>
            <person name="Charbit A."/>
            <person name="Chetouani F."/>
            <person name="Couve E."/>
            <person name="de Daruvar A."/>
            <person name="Dehoux P."/>
            <person name="Domann E."/>
            <person name="Dominguez-Bernal G."/>
            <person name="Duchaud E."/>
            <person name="Durant L."/>
            <person name="Dussurget O."/>
            <person name="Entian K.-D."/>
            <person name="Fsihi H."/>
            <person name="Garcia-del Portillo F."/>
            <person name="Garrido P."/>
            <person name="Gautier L."/>
            <person name="Goebel W."/>
            <person name="Gomez-Lopez N."/>
            <person name="Hain T."/>
            <person name="Hauf J."/>
            <person name="Jackson D."/>
            <person name="Jones L.-M."/>
            <person name="Kaerst U."/>
            <person name="Kreft J."/>
            <person name="Kuhn M."/>
            <person name="Kunst F."/>
            <person name="Kurapkat G."/>
            <person name="Madueno E."/>
            <person name="Maitournam A."/>
            <person name="Mata Vicente J."/>
            <person name="Ng E."/>
            <person name="Nedjari H."/>
            <person name="Nordsiek G."/>
            <person name="Novella S."/>
            <person name="de Pablos B."/>
            <person name="Perez-Diaz J.-C."/>
            <person name="Purcell R."/>
            <person name="Remmel B."/>
            <person name="Rose M."/>
            <person name="Schlueter T."/>
            <person name="Simoes N."/>
            <person name="Tierrez A."/>
            <person name="Vazquez-Boland J.-A."/>
            <person name="Voss H."/>
            <person name="Wehland J."/>
            <person name="Cossart P."/>
        </authorList>
    </citation>
    <scope>NUCLEOTIDE SEQUENCE [LARGE SCALE GENOMIC DNA]</scope>
    <source>
        <strain>ATCC BAA-679 / EGD-e</strain>
    </source>
</reference>
<protein>
    <recommendedName>
        <fullName evidence="1">Alanine--tRNA ligase</fullName>
        <ecNumber evidence="1">6.1.1.7</ecNumber>
    </recommendedName>
    <alternativeName>
        <fullName evidence="1">Alanyl-tRNA synthetase</fullName>
        <shortName evidence="1">AlaRS</shortName>
    </alternativeName>
</protein>
<keyword id="KW-0030">Aminoacyl-tRNA synthetase</keyword>
<keyword id="KW-0067">ATP-binding</keyword>
<keyword id="KW-0963">Cytoplasm</keyword>
<keyword id="KW-0436">Ligase</keyword>
<keyword id="KW-0479">Metal-binding</keyword>
<keyword id="KW-0547">Nucleotide-binding</keyword>
<keyword id="KW-0648">Protein biosynthesis</keyword>
<keyword id="KW-1185">Reference proteome</keyword>
<keyword id="KW-0694">RNA-binding</keyword>
<keyword id="KW-0820">tRNA-binding</keyword>
<keyword id="KW-0862">Zinc</keyword>
<accession>Q8Y722</accession>
<dbReference type="EC" id="6.1.1.7" evidence="1"/>
<dbReference type="EMBL" id="AL591979">
    <property type="protein sequence ID" value="CAC99582.1"/>
    <property type="molecule type" value="Genomic_DNA"/>
</dbReference>
<dbReference type="PIR" id="AH1262">
    <property type="entry name" value="AH1262"/>
</dbReference>
<dbReference type="RefSeq" id="NP_465029.1">
    <property type="nucleotide sequence ID" value="NC_003210.1"/>
</dbReference>
<dbReference type="RefSeq" id="WP_003723690.1">
    <property type="nucleotide sequence ID" value="NZ_CP149495.1"/>
</dbReference>
<dbReference type="SMR" id="Q8Y722"/>
<dbReference type="STRING" id="169963.gene:17594161"/>
<dbReference type="PaxDb" id="169963-lmo1504"/>
<dbReference type="EnsemblBacteria" id="CAC99582">
    <property type="protein sequence ID" value="CAC99582"/>
    <property type="gene ID" value="CAC99582"/>
</dbReference>
<dbReference type="GeneID" id="987749"/>
<dbReference type="KEGG" id="lmo:lmo1504"/>
<dbReference type="PATRIC" id="fig|169963.11.peg.1545"/>
<dbReference type="eggNOG" id="COG0013">
    <property type="taxonomic scope" value="Bacteria"/>
</dbReference>
<dbReference type="HOGENOM" id="CLU_004485_1_1_9"/>
<dbReference type="OrthoDB" id="9803884at2"/>
<dbReference type="PhylomeDB" id="Q8Y722"/>
<dbReference type="BioCyc" id="LMON169963:LMO1504-MONOMER"/>
<dbReference type="Proteomes" id="UP000000817">
    <property type="component" value="Chromosome"/>
</dbReference>
<dbReference type="GO" id="GO:0005829">
    <property type="term" value="C:cytosol"/>
    <property type="evidence" value="ECO:0000318"/>
    <property type="project" value="GO_Central"/>
</dbReference>
<dbReference type="GO" id="GO:0004813">
    <property type="term" value="F:alanine-tRNA ligase activity"/>
    <property type="evidence" value="ECO:0000318"/>
    <property type="project" value="GO_Central"/>
</dbReference>
<dbReference type="GO" id="GO:0002161">
    <property type="term" value="F:aminoacyl-tRNA deacylase activity"/>
    <property type="evidence" value="ECO:0000318"/>
    <property type="project" value="GO_Central"/>
</dbReference>
<dbReference type="GO" id="GO:0005524">
    <property type="term" value="F:ATP binding"/>
    <property type="evidence" value="ECO:0007669"/>
    <property type="project" value="UniProtKB-UniRule"/>
</dbReference>
<dbReference type="GO" id="GO:0140096">
    <property type="term" value="F:catalytic activity, acting on a protein"/>
    <property type="evidence" value="ECO:0007669"/>
    <property type="project" value="UniProtKB-ARBA"/>
</dbReference>
<dbReference type="GO" id="GO:0016740">
    <property type="term" value="F:transferase activity"/>
    <property type="evidence" value="ECO:0007669"/>
    <property type="project" value="UniProtKB-ARBA"/>
</dbReference>
<dbReference type="GO" id="GO:0000049">
    <property type="term" value="F:tRNA binding"/>
    <property type="evidence" value="ECO:0007669"/>
    <property type="project" value="UniProtKB-KW"/>
</dbReference>
<dbReference type="GO" id="GO:0008270">
    <property type="term" value="F:zinc ion binding"/>
    <property type="evidence" value="ECO:0007669"/>
    <property type="project" value="UniProtKB-UniRule"/>
</dbReference>
<dbReference type="GO" id="GO:0006419">
    <property type="term" value="P:alanyl-tRNA aminoacylation"/>
    <property type="evidence" value="ECO:0000318"/>
    <property type="project" value="GO_Central"/>
</dbReference>
<dbReference type="CDD" id="cd00673">
    <property type="entry name" value="AlaRS_core"/>
    <property type="match status" value="1"/>
</dbReference>
<dbReference type="FunFam" id="2.40.30.130:FF:000011">
    <property type="entry name" value="Alanine--tRNA ligase"/>
    <property type="match status" value="1"/>
</dbReference>
<dbReference type="FunFam" id="3.10.310.40:FF:000001">
    <property type="entry name" value="Alanine--tRNA ligase"/>
    <property type="match status" value="1"/>
</dbReference>
<dbReference type="FunFam" id="3.30.54.20:FF:000001">
    <property type="entry name" value="Alanine--tRNA ligase"/>
    <property type="match status" value="1"/>
</dbReference>
<dbReference type="FunFam" id="3.30.930.10:FF:000046">
    <property type="entry name" value="Alanine--tRNA ligase"/>
    <property type="match status" value="1"/>
</dbReference>
<dbReference type="FunFam" id="3.30.980.10:FF:000004">
    <property type="entry name" value="Alanine--tRNA ligase, cytoplasmic"/>
    <property type="match status" value="1"/>
</dbReference>
<dbReference type="Gene3D" id="2.40.30.130">
    <property type="match status" value="1"/>
</dbReference>
<dbReference type="Gene3D" id="3.10.310.40">
    <property type="match status" value="1"/>
</dbReference>
<dbReference type="Gene3D" id="3.30.54.20">
    <property type="match status" value="1"/>
</dbReference>
<dbReference type="Gene3D" id="6.10.250.550">
    <property type="match status" value="1"/>
</dbReference>
<dbReference type="Gene3D" id="3.30.930.10">
    <property type="entry name" value="Bira Bifunctional Protein, Domain 2"/>
    <property type="match status" value="1"/>
</dbReference>
<dbReference type="Gene3D" id="3.30.980.10">
    <property type="entry name" value="Threonyl-trna Synthetase, Chain A, domain 2"/>
    <property type="match status" value="1"/>
</dbReference>
<dbReference type="HAMAP" id="MF_00036_B">
    <property type="entry name" value="Ala_tRNA_synth_B"/>
    <property type="match status" value="1"/>
</dbReference>
<dbReference type="InterPro" id="IPR045864">
    <property type="entry name" value="aa-tRNA-synth_II/BPL/LPL"/>
</dbReference>
<dbReference type="InterPro" id="IPR002318">
    <property type="entry name" value="Ala-tRNA-lgiase_IIc"/>
</dbReference>
<dbReference type="InterPro" id="IPR018162">
    <property type="entry name" value="Ala-tRNA-ligase_IIc_anticod-bd"/>
</dbReference>
<dbReference type="InterPro" id="IPR018165">
    <property type="entry name" value="Ala-tRNA-synth_IIc_core"/>
</dbReference>
<dbReference type="InterPro" id="IPR018164">
    <property type="entry name" value="Ala-tRNA-synth_IIc_N"/>
</dbReference>
<dbReference type="InterPro" id="IPR050058">
    <property type="entry name" value="Ala-tRNA_ligase"/>
</dbReference>
<dbReference type="InterPro" id="IPR023033">
    <property type="entry name" value="Ala_tRNA_ligase_euk/bac"/>
</dbReference>
<dbReference type="InterPro" id="IPR003156">
    <property type="entry name" value="DHHA1_dom"/>
</dbReference>
<dbReference type="InterPro" id="IPR018163">
    <property type="entry name" value="Thr/Ala-tRNA-synth_IIc_edit"/>
</dbReference>
<dbReference type="InterPro" id="IPR009000">
    <property type="entry name" value="Transl_B-barrel_sf"/>
</dbReference>
<dbReference type="InterPro" id="IPR012947">
    <property type="entry name" value="tRNA_SAD"/>
</dbReference>
<dbReference type="NCBIfam" id="TIGR00344">
    <property type="entry name" value="alaS"/>
    <property type="match status" value="1"/>
</dbReference>
<dbReference type="PANTHER" id="PTHR11777:SF9">
    <property type="entry name" value="ALANINE--TRNA LIGASE, CYTOPLASMIC"/>
    <property type="match status" value="1"/>
</dbReference>
<dbReference type="PANTHER" id="PTHR11777">
    <property type="entry name" value="ALANYL-TRNA SYNTHETASE"/>
    <property type="match status" value="1"/>
</dbReference>
<dbReference type="Pfam" id="PF02272">
    <property type="entry name" value="DHHA1"/>
    <property type="match status" value="1"/>
</dbReference>
<dbReference type="Pfam" id="PF01411">
    <property type="entry name" value="tRNA-synt_2c"/>
    <property type="match status" value="1"/>
</dbReference>
<dbReference type="Pfam" id="PF07973">
    <property type="entry name" value="tRNA_SAD"/>
    <property type="match status" value="1"/>
</dbReference>
<dbReference type="PRINTS" id="PR00980">
    <property type="entry name" value="TRNASYNTHALA"/>
</dbReference>
<dbReference type="SMART" id="SM00863">
    <property type="entry name" value="tRNA_SAD"/>
    <property type="match status" value="1"/>
</dbReference>
<dbReference type="SUPFAM" id="SSF55681">
    <property type="entry name" value="Class II aaRS and biotin synthetases"/>
    <property type="match status" value="1"/>
</dbReference>
<dbReference type="SUPFAM" id="SSF101353">
    <property type="entry name" value="Putative anticodon-binding domain of alanyl-tRNA synthetase (AlaRS)"/>
    <property type="match status" value="1"/>
</dbReference>
<dbReference type="SUPFAM" id="SSF55186">
    <property type="entry name" value="ThrRS/AlaRS common domain"/>
    <property type="match status" value="1"/>
</dbReference>
<dbReference type="SUPFAM" id="SSF50447">
    <property type="entry name" value="Translation proteins"/>
    <property type="match status" value="1"/>
</dbReference>
<dbReference type="PROSITE" id="PS50860">
    <property type="entry name" value="AA_TRNA_LIGASE_II_ALA"/>
    <property type="match status" value="1"/>
</dbReference>
<comment type="function">
    <text evidence="1">Catalyzes the attachment of alanine to tRNA(Ala) in a two-step reaction: alanine is first activated by ATP to form Ala-AMP and then transferred to the acceptor end of tRNA(Ala). Also edits incorrectly charged Ser-tRNA(Ala) and Gly-tRNA(Ala) via its editing domain.</text>
</comment>
<comment type="catalytic activity">
    <reaction evidence="1">
        <text>tRNA(Ala) + L-alanine + ATP = L-alanyl-tRNA(Ala) + AMP + diphosphate</text>
        <dbReference type="Rhea" id="RHEA:12540"/>
        <dbReference type="Rhea" id="RHEA-COMP:9657"/>
        <dbReference type="Rhea" id="RHEA-COMP:9923"/>
        <dbReference type="ChEBI" id="CHEBI:30616"/>
        <dbReference type="ChEBI" id="CHEBI:33019"/>
        <dbReference type="ChEBI" id="CHEBI:57972"/>
        <dbReference type="ChEBI" id="CHEBI:78442"/>
        <dbReference type="ChEBI" id="CHEBI:78497"/>
        <dbReference type="ChEBI" id="CHEBI:456215"/>
        <dbReference type="EC" id="6.1.1.7"/>
    </reaction>
</comment>
<comment type="cofactor">
    <cofactor evidence="1">
        <name>Zn(2+)</name>
        <dbReference type="ChEBI" id="CHEBI:29105"/>
    </cofactor>
    <text evidence="1">Binds 1 zinc ion per subunit.</text>
</comment>
<comment type="subcellular location">
    <subcellularLocation>
        <location evidence="1">Cytoplasm</location>
    </subcellularLocation>
</comment>
<comment type="domain">
    <text evidence="1">Consists of three domains; the N-terminal catalytic domain, the editing domain and the C-terminal C-Ala domain. The editing domain removes incorrectly charged amino acids, while the C-Ala domain, along with tRNA(Ala), serves as a bridge to cooperatively bring together the editing and aminoacylation centers thus stimulating deacylation of misacylated tRNAs.</text>
</comment>
<comment type="similarity">
    <text evidence="1">Belongs to the class-II aminoacyl-tRNA synthetase family.</text>
</comment>
<feature type="chain" id="PRO_0000075139" description="Alanine--tRNA ligase">
    <location>
        <begin position="1"/>
        <end position="879"/>
    </location>
</feature>
<feature type="binding site" evidence="1">
    <location>
        <position position="566"/>
    </location>
    <ligand>
        <name>Zn(2+)</name>
        <dbReference type="ChEBI" id="CHEBI:29105"/>
    </ligand>
</feature>
<feature type="binding site" evidence="1">
    <location>
        <position position="570"/>
    </location>
    <ligand>
        <name>Zn(2+)</name>
        <dbReference type="ChEBI" id="CHEBI:29105"/>
    </ligand>
</feature>
<feature type="binding site" evidence="1">
    <location>
        <position position="668"/>
    </location>
    <ligand>
        <name>Zn(2+)</name>
        <dbReference type="ChEBI" id="CHEBI:29105"/>
    </ligand>
</feature>
<feature type="binding site" evidence="1">
    <location>
        <position position="672"/>
    </location>
    <ligand>
        <name>Zn(2+)</name>
        <dbReference type="ChEBI" id="CHEBI:29105"/>
    </ligand>
</feature>
<sequence length="879" mass="97977">MKQLSSAEVRQLFLDFFKEKGHTIEPSAPLVPNNDPTILWINSGVATMKKYFDGSVIPDNPRMANAQKSIRTNDIENVGKTARHHTFFEMLGNFSIGDYFKEGAIVFAWEFLTSPKWIGFDPDKLYVTVYPEDEEAKTLWREKIGLSDDHIVEIEDNFWDIGIGPSGPDSEIFYDRGPAFGDDASDPELYPGGENERYLEIWNLVFSQFNHNPDGTYTPLPKQNIDTGMGLERMVSIIQDAPTNFETDLFMPIIREVEQIAGVKYGHSQENDVAFKVIADHIRTVAFAIGDGALPSNEGRGYILRRLLRRAVRYAKVLTINEPFMYKLVPVVGKIMNSFYPEVENQTDFIQKVIRTEEERFHETLNEGLAILETILKTAKETNEQVIKGADIFKLYDTFGFPVELTEEYAEDHGLKVDHAGFEAEMKEQRARARAARADVKSMQVQGELLANLTEKSAFVGYNSTEHVSEILYLIQNDTLVDEVAAGNEAQVIFKETPFYAESGGQVADKGTIESETGLAYVEDVQKAPNKQNLHRISVKEGVLKTGDTVKLAVDKVKRRETIKNHTATHLLHRALKDTLGEHVNQAGSLVSPDRLRFDFSHFGQITEEELTKMEEIVNEKIWEQINVVIEEMPIAEAKELGAMALFGEKYGDIVRVVQVGKYSIELCGGVHVRNTADIGLFKIVSETGIGAGTRRIEAVTGKEAYRFVTEQENTLKQAASLLKTTTKETPQKVELLQADLREVKRENESLLSKLASAASADIFESPEEIGGVKVIAKQVNAKDMNQLRQFVDNWKDKKIGGILVLGAVQGDKVNLISAVSEEAIKAGYHAGKLLKEVATRCGGNGGGRPDMAQAGGKNPAELGTALDYVSTWVKEQQA</sequence>